<proteinExistence type="inferred from homology"/>
<reference key="1">
    <citation type="journal article" date="2004" name="Proc. Natl. Acad. Sci. U.S.A.">
        <title>The genome sequence of the probiotic intestinal bacterium Lactobacillus johnsonii NCC 533.</title>
        <authorList>
            <person name="Pridmore R.D."/>
            <person name="Berger B."/>
            <person name="Desiere F."/>
            <person name="Vilanova D."/>
            <person name="Barretto C."/>
            <person name="Pittet A.-C."/>
            <person name="Zwahlen M.-C."/>
            <person name="Rouvet M."/>
            <person name="Altermann E."/>
            <person name="Barrangou R."/>
            <person name="Mollet B."/>
            <person name="Mercenier A."/>
            <person name="Klaenhammer T."/>
            <person name="Arigoni F."/>
            <person name="Schell M.A."/>
        </authorList>
    </citation>
    <scope>NUCLEOTIDE SEQUENCE [LARGE SCALE GENOMIC DNA]</scope>
    <source>
        <strain>CNCM I-1225 / La1 / NCC 533</strain>
    </source>
</reference>
<sequence length="287" mass="30526">MKYVYLFLPAIGWGLMPLVIASVKNSTVYNQIVGTVAASFIFGAIVMAIMHPAMSWSLFLLSALGGACWVIGQVGQYISYEKIGVSETMPISTGLQLIGVPLVGVLAFGEWSSPQAKLYGFIGILVLIIGVVLTSFTDRGTSEGNKSNQVSTIILLVLTSLGYITSSSIPKALHGNSVSIFFGQTFGMLVAVFIYTLVTKNLHVWKEKSTVQSGGAGILYAIAALAYILSVQDNGVNMAFVISQLCVVISTLGGLIFLHEKKTRKGLIFTIAGLILIIGGAMLTTLF</sequence>
<evidence type="ECO:0000255" key="1"/>
<evidence type="ECO:0000305" key="2"/>
<accession>P60951</accession>
<comment type="subcellular location">
    <subcellularLocation>
        <location evidence="2">Cell membrane</location>
        <topology evidence="2">Multi-pass membrane protein</topology>
    </subcellularLocation>
</comment>
<comment type="similarity">
    <text evidence="2">Belongs to the GRP transporter (TC 2.A.7.5) family.</text>
</comment>
<keyword id="KW-1003">Cell membrane</keyword>
<keyword id="KW-0472">Membrane</keyword>
<keyword id="KW-0762">Sugar transport</keyword>
<keyword id="KW-0812">Transmembrane</keyword>
<keyword id="KW-1133">Transmembrane helix</keyword>
<keyword id="KW-0813">Transport</keyword>
<dbReference type="EMBL" id="AE017198">
    <property type="protein sequence ID" value="AAS08152.1"/>
    <property type="molecule type" value="Genomic_DNA"/>
</dbReference>
<dbReference type="RefSeq" id="WP_004898649.1">
    <property type="nucleotide sequence ID" value="NC_005362.1"/>
</dbReference>
<dbReference type="SMR" id="P60951"/>
<dbReference type="KEGG" id="ljo:LJ_0170"/>
<dbReference type="eggNOG" id="COG4975">
    <property type="taxonomic scope" value="Bacteria"/>
</dbReference>
<dbReference type="HOGENOM" id="CLU_076024_0_0_9"/>
<dbReference type="Proteomes" id="UP000000581">
    <property type="component" value="Chromosome"/>
</dbReference>
<dbReference type="GO" id="GO:0005886">
    <property type="term" value="C:plasma membrane"/>
    <property type="evidence" value="ECO:0007669"/>
    <property type="project" value="UniProtKB-SubCell"/>
</dbReference>
<dbReference type="GO" id="GO:0015144">
    <property type="term" value="F:carbohydrate transmembrane transporter activity"/>
    <property type="evidence" value="ECO:0007669"/>
    <property type="project" value="InterPro"/>
</dbReference>
<dbReference type="CDD" id="cd23110">
    <property type="entry name" value="GRP"/>
    <property type="match status" value="1"/>
</dbReference>
<dbReference type="Gene3D" id="1.10.3730.20">
    <property type="match status" value="1"/>
</dbReference>
<dbReference type="InterPro" id="IPR010651">
    <property type="entry name" value="Sugar_transport"/>
</dbReference>
<dbReference type="PANTHER" id="PTHR16119">
    <property type="entry name" value="TRANSMEMBRANE PROTEIN 144"/>
    <property type="match status" value="1"/>
</dbReference>
<dbReference type="PANTHER" id="PTHR16119:SF17">
    <property type="entry name" value="TRANSMEMBRANE PROTEIN 144"/>
    <property type="match status" value="1"/>
</dbReference>
<dbReference type="Pfam" id="PF06800">
    <property type="entry name" value="Sugar_transport"/>
    <property type="match status" value="1"/>
</dbReference>
<dbReference type="SUPFAM" id="SSF103481">
    <property type="entry name" value="Multidrug resistance efflux transporter EmrE"/>
    <property type="match status" value="2"/>
</dbReference>
<feature type="chain" id="PRO_0000213651" description="Putative sugar uptake protein LJ_0170">
    <location>
        <begin position="1"/>
        <end position="287"/>
    </location>
</feature>
<feature type="transmembrane region" description="Helical" evidence="1">
    <location>
        <begin position="4"/>
        <end position="23"/>
    </location>
</feature>
<feature type="transmembrane region" description="Helical" evidence="1">
    <location>
        <begin position="28"/>
        <end position="50"/>
    </location>
</feature>
<feature type="transmembrane region" description="Helical" evidence="1">
    <location>
        <begin position="56"/>
        <end position="78"/>
    </location>
</feature>
<feature type="transmembrane region" description="Helical" evidence="1">
    <location>
        <begin position="91"/>
        <end position="108"/>
    </location>
</feature>
<feature type="transmembrane region" description="Helical" evidence="1">
    <location>
        <begin position="118"/>
        <end position="137"/>
    </location>
</feature>
<feature type="transmembrane region" description="Helical" evidence="1">
    <location>
        <begin position="150"/>
        <end position="169"/>
    </location>
</feature>
<feature type="transmembrane region" description="Helical" evidence="1">
    <location>
        <begin position="179"/>
        <end position="198"/>
    </location>
</feature>
<feature type="transmembrane region" description="Helical" evidence="1">
    <location>
        <begin position="211"/>
        <end position="230"/>
    </location>
</feature>
<feature type="transmembrane region" description="Helical" evidence="1">
    <location>
        <begin position="240"/>
        <end position="259"/>
    </location>
</feature>
<feature type="transmembrane region" description="Helical" evidence="1">
    <location>
        <begin position="266"/>
        <end position="285"/>
    </location>
</feature>
<organism>
    <name type="scientific">Lactobacillus johnsonii (strain CNCM I-12250 / La1 / NCC 533)</name>
    <dbReference type="NCBI Taxonomy" id="257314"/>
    <lineage>
        <taxon>Bacteria</taxon>
        <taxon>Bacillati</taxon>
        <taxon>Bacillota</taxon>
        <taxon>Bacilli</taxon>
        <taxon>Lactobacillales</taxon>
        <taxon>Lactobacillaceae</taxon>
        <taxon>Lactobacillus</taxon>
    </lineage>
</organism>
<gene>
    <name type="ordered locus">LJ_0170</name>
</gene>
<name>Y170_LACJO</name>
<protein>
    <recommendedName>
        <fullName>Putative sugar uptake protein LJ_0170</fullName>
    </recommendedName>
</protein>